<reference key="1">
    <citation type="journal article" date="2008" name="Environ. Microbiol.">
        <title>The genome of Erwinia tasmaniensis strain Et1/99, a non-pathogenic bacterium in the genus Erwinia.</title>
        <authorList>
            <person name="Kube M."/>
            <person name="Migdoll A.M."/>
            <person name="Mueller I."/>
            <person name="Kuhl H."/>
            <person name="Beck A."/>
            <person name="Reinhardt R."/>
            <person name="Geider K."/>
        </authorList>
    </citation>
    <scope>NUCLEOTIDE SEQUENCE [LARGE SCALE GENOMIC DNA]</scope>
    <source>
        <strain>DSM 17950 / CFBP 7177 / CIP 109463 / NCPPB 4357 / Et1/99</strain>
    </source>
</reference>
<sequence>MRLIPLLTPDQVGKWAARHIVNRINAFKPTADRPFVLGLPTGGTPLEAYKHLIDMHKAGQVSFKHVVTFNMDEYVGLPTEHPESYHSFMHRNFFDHVDISSENINLLNGNAADIDAECHQYEEKIRAYGKIHLFMGGVGNDGHIAFNEPASSLASRTRIKTLTHDTRIANSRFFGGDVNQVPKYALTVGVGTLLDAEEVMILVTGHLKAQALQAAVEGNVNHMWTISCLQLHAKGIVVCDEPATMELKMKTVKYFREMEAENIKHL</sequence>
<evidence type="ECO:0000255" key="1">
    <source>
        <dbReference type="HAMAP-Rule" id="MF_01241"/>
    </source>
</evidence>
<protein>
    <recommendedName>
        <fullName evidence="1">Glucosamine-6-phosphate deaminase</fullName>
        <ecNumber evidence="1">3.5.99.6</ecNumber>
    </recommendedName>
    <alternativeName>
        <fullName evidence="1">GlcN6P deaminase</fullName>
        <shortName evidence="1">GNPDA</shortName>
    </alternativeName>
    <alternativeName>
        <fullName evidence="1">Glucosamine-6-phosphate isomerase</fullName>
    </alternativeName>
</protein>
<feature type="chain" id="PRO_1000139776" description="Glucosamine-6-phosphate deaminase">
    <location>
        <begin position="1"/>
        <end position="266"/>
    </location>
</feature>
<feature type="active site" description="Proton acceptor; for enolization step" evidence="1">
    <location>
        <position position="72"/>
    </location>
</feature>
<feature type="active site" description="For ring-opening step" evidence="1">
    <location>
        <position position="141"/>
    </location>
</feature>
<feature type="active site" description="Proton acceptor; for ring-opening step" evidence="1">
    <location>
        <position position="143"/>
    </location>
</feature>
<feature type="active site" description="For ring-opening step" evidence="1">
    <location>
        <position position="148"/>
    </location>
</feature>
<feature type="site" description="Part of the allosteric site" evidence="1">
    <location>
        <position position="151"/>
    </location>
</feature>
<feature type="site" description="Part of the allosteric site" evidence="1">
    <location>
        <position position="158"/>
    </location>
</feature>
<feature type="site" description="Part of the allosteric site" evidence="1">
    <location>
        <position position="160"/>
    </location>
</feature>
<feature type="site" description="Part of the allosteric site" evidence="1">
    <location>
        <position position="161"/>
    </location>
</feature>
<feature type="site" description="Part of the allosteric site" evidence="1">
    <location>
        <position position="254"/>
    </location>
</feature>
<gene>
    <name evidence="1" type="primary">nagB</name>
    <name type="ordered locus">ETA_23310</name>
</gene>
<dbReference type="EC" id="3.5.99.6" evidence="1"/>
<dbReference type="EMBL" id="CU468135">
    <property type="protein sequence ID" value="CAO97377.1"/>
    <property type="molecule type" value="Genomic_DNA"/>
</dbReference>
<dbReference type="RefSeq" id="WP_012442046.1">
    <property type="nucleotide sequence ID" value="NC_010694.1"/>
</dbReference>
<dbReference type="SMR" id="B2VBN5"/>
<dbReference type="STRING" id="465817.ETA_23310"/>
<dbReference type="KEGG" id="eta:ETA_23310"/>
<dbReference type="eggNOG" id="COG0363">
    <property type="taxonomic scope" value="Bacteria"/>
</dbReference>
<dbReference type="HOGENOM" id="CLU_049611_0_1_6"/>
<dbReference type="OrthoDB" id="9791139at2"/>
<dbReference type="UniPathway" id="UPA00629">
    <property type="reaction ID" value="UER00684"/>
</dbReference>
<dbReference type="Proteomes" id="UP000001726">
    <property type="component" value="Chromosome"/>
</dbReference>
<dbReference type="GO" id="GO:0005737">
    <property type="term" value="C:cytoplasm"/>
    <property type="evidence" value="ECO:0007669"/>
    <property type="project" value="TreeGrafter"/>
</dbReference>
<dbReference type="GO" id="GO:0004342">
    <property type="term" value="F:glucosamine-6-phosphate deaminase activity"/>
    <property type="evidence" value="ECO:0007669"/>
    <property type="project" value="UniProtKB-UniRule"/>
</dbReference>
<dbReference type="GO" id="GO:0042802">
    <property type="term" value="F:identical protein binding"/>
    <property type="evidence" value="ECO:0007669"/>
    <property type="project" value="TreeGrafter"/>
</dbReference>
<dbReference type="GO" id="GO:0005975">
    <property type="term" value="P:carbohydrate metabolic process"/>
    <property type="evidence" value="ECO:0007669"/>
    <property type="project" value="InterPro"/>
</dbReference>
<dbReference type="GO" id="GO:0006043">
    <property type="term" value="P:glucosamine catabolic process"/>
    <property type="evidence" value="ECO:0007669"/>
    <property type="project" value="TreeGrafter"/>
</dbReference>
<dbReference type="GO" id="GO:0006046">
    <property type="term" value="P:N-acetylglucosamine catabolic process"/>
    <property type="evidence" value="ECO:0007669"/>
    <property type="project" value="TreeGrafter"/>
</dbReference>
<dbReference type="GO" id="GO:0019262">
    <property type="term" value="P:N-acetylneuraminate catabolic process"/>
    <property type="evidence" value="ECO:0007669"/>
    <property type="project" value="UniProtKB-UniRule"/>
</dbReference>
<dbReference type="CDD" id="cd01399">
    <property type="entry name" value="GlcN6P_deaminase"/>
    <property type="match status" value="1"/>
</dbReference>
<dbReference type="FunFam" id="3.40.50.1360:FF:000002">
    <property type="entry name" value="Glucosamine-6-phosphate deaminase"/>
    <property type="match status" value="1"/>
</dbReference>
<dbReference type="Gene3D" id="3.40.50.1360">
    <property type="match status" value="1"/>
</dbReference>
<dbReference type="HAMAP" id="MF_01241">
    <property type="entry name" value="GlcN6P_deamin"/>
    <property type="match status" value="1"/>
</dbReference>
<dbReference type="InterPro" id="IPR006148">
    <property type="entry name" value="Glc/Gal-6P_isomerase"/>
</dbReference>
<dbReference type="InterPro" id="IPR004547">
    <property type="entry name" value="Glucosamine6P_isomerase"/>
</dbReference>
<dbReference type="InterPro" id="IPR018321">
    <property type="entry name" value="Glucosamine6P_isomerase_CS"/>
</dbReference>
<dbReference type="InterPro" id="IPR037171">
    <property type="entry name" value="NagB/RpiA_transferase-like"/>
</dbReference>
<dbReference type="NCBIfam" id="TIGR00502">
    <property type="entry name" value="nagB"/>
    <property type="match status" value="1"/>
</dbReference>
<dbReference type="NCBIfam" id="NF001685">
    <property type="entry name" value="PRK00443.1-5"/>
    <property type="match status" value="1"/>
</dbReference>
<dbReference type="PANTHER" id="PTHR11280">
    <property type="entry name" value="GLUCOSAMINE-6-PHOSPHATE ISOMERASE"/>
    <property type="match status" value="1"/>
</dbReference>
<dbReference type="PANTHER" id="PTHR11280:SF5">
    <property type="entry name" value="GLUCOSAMINE-6-PHOSPHATE ISOMERASE"/>
    <property type="match status" value="1"/>
</dbReference>
<dbReference type="Pfam" id="PF01182">
    <property type="entry name" value="Glucosamine_iso"/>
    <property type="match status" value="1"/>
</dbReference>
<dbReference type="SUPFAM" id="SSF100950">
    <property type="entry name" value="NagB/RpiA/CoA transferase-like"/>
    <property type="match status" value="1"/>
</dbReference>
<dbReference type="PROSITE" id="PS01161">
    <property type="entry name" value="GLC_GALNAC_ISOMERASE"/>
    <property type="match status" value="1"/>
</dbReference>
<organism>
    <name type="scientific">Erwinia tasmaniensis (strain DSM 17950 / CFBP 7177 / CIP 109463 / NCPPB 4357 / Et1/99)</name>
    <dbReference type="NCBI Taxonomy" id="465817"/>
    <lineage>
        <taxon>Bacteria</taxon>
        <taxon>Pseudomonadati</taxon>
        <taxon>Pseudomonadota</taxon>
        <taxon>Gammaproteobacteria</taxon>
        <taxon>Enterobacterales</taxon>
        <taxon>Erwiniaceae</taxon>
        <taxon>Erwinia</taxon>
    </lineage>
</organism>
<proteinExistence type="inferred from homology"/>
<name>NAGB_ERWT9</name>
<accession>B2VBN5</accession>
<comment type="function">
    <text evidence="1">Catalyzes the reversible isomerization-deamination of glucosamine 6-phosphate (GlcN6P) to form fructose 6-phosphate (Fru6P) and ammonium ion.</text>
</comment>
<comment type="catalytic activity">
    <reaction evidence="1">
        <text>alpha-D-glucosamine 6-phosphate + H2O = beta-D-fructose 6-phosphate + NH4(+)</text>
        <dbReference type="Rhea" id="RHEA:12172"/>
        <dbReference type="ChEBI" id="CHEBI:15377"/>
        <dbReference type="ChEBI" id="CHEBI:28938"/>
        <dbReference type="ChEBI" id="CHEBI:57634"/>
        <dbReference type="ChEBI" id="CHEBI:75989"/>
        <dbReference type="EC" id="3.5.99.6"/>
    </reaction>
</comment>
<comment type="activity regulation">
    <text evidence="1">Allosterically activated by N-acetylglucosamine 6-phosphate (GlcNAc6P).</text>
</comment>
<comment type="pathway">
    <text evidence="1">Amino-sugar metabolism; N-acetylneuraminate degradation; D-fructose 6-phosphate from N-acetylneuraminate: step 5/5.</text>
</comment>
<comment type="subunit">
    <text evidence="1">Homohexamer.</text>
</comment>
<comment type="similarity">
    <text evidence="1">Belongs to the glucosamine/galactosamine-6-phosphate isomerase family. NagB subfamily.</text>
</comment>
<keyword id="KW-0021">Allosteric enzyme</keyword>
<keyword id="KW-0119">Carbohydrate metabolism</keyword>
<keyword id="KW-0378">Hydrolase</keyword>
<keyword id="KW-1185">Reference proteome</keyword>